<organism>
    <name type="scientific">Arabidopsis thaliana</name>
    <name type="common">Mouse-ear cress</name>
    <dbReference type="NCBI Taxonomy" id="3702"/>
    <lineage>
        <taxon>Eukaryota</taxon>
        <taxon>Viridiplantae</taxon>
        <taxon>Streptophyta</taxon>
        <taxon>Embryophyta</taxon>
        <taxon>Tracheophyta</taxon>
        <taxon>Spermatophyta</taxon>
        <taxon>Magnoliopsida</taxon>
        <taxon>eudicotyledons</taxon>
        <taxon>Gunneridae</taxon>
        <taxon>Pentapetalae</taxon>
        <taxon>rosids</taxon>
        <taxon>malvids</taxon>
        <taxon>Brassicales</taxon>
        <taxon>Brassicaceae</taxon>
        <taxon>Camelineae</taxon>
        <taxon>Arabidopsis</taxon>
    </lineage>
</organism>
<feature type="chain" id="PRO_0000283567" description="Putative F-box protein At5g66830">
    <location>
        <begin position="1"/>
        <end position="394"/>
    </location>
</feature>
<feature type="domain" description="F-box">
    <location>
        <begin position="17"/>
        <end position="63"/>
    </location>
</feature>
<accession>Q9FKZ7</accession>
<name>FB301_ARATH</name>
<dbReference type="EMBL" id="AB010700">
    <property type="protein sequence ID" value="BAB08625.1"/>
    <property type="molecule type" value="Genomic_DNA"/>
</dbReference>
<dbReference type="EMBL" id="CP002688">
    <property type="protein sequence ID" value="AED98269.1"/>
    <property type="molecule type" value="Genomic_DNA"/>
</dbReference>
<dbReference type="RefSeq" id="NP_201484.1">
    <property type="nucleotide sequence ID" value="NM_126082.2"/>
</dbReference>
<dbReference type="BioGRID" id="22059">
    <property type="interactions" value="8"/>
</dbReference>
<dbReference type="FunCoup" id="Q9FKZ7">
    <property type="interactions" value="29"/>
</dbReference>
<dbReference type="IntAct" id="Q9FKZ7">
    <property type="interactions" value="8"/>
</dbReference>
<dbReference type="PaxDb" id="3702-AT5G66830.1"/>
<dbReference type="ProteomicsDB" id="230725"/>
<dbReference type="EnsemblPlants" id="AT5G66830.1">
    <property type="protein sequence ID" value="AT5G66830.1"/>
    <property type="gene ID" value="AT5G66830"/>
</dbReference>
<dbReference type="GeneID" id="836817"/>
<dbReference type="Gramene" id="AT5G66830.1">
    <property type="protein sequence ID" value="AT5G66830.1"/>
    <property type="gene ID" value="AT5G66830"/>
</dbReference>
<dbReference type="KEGG" id="ath:AT5G66830"/>
<dbReference type="Araport" id="AT5G66830"/>
<dbReference type="TAIR" id="AT5G66830">
    <property type="gene designation" value="ATFDB38"/>
</dbReference>
<dbReference type="HOGENOM" id="CLU_019286_7_1_1"/>
<dbReference type="InParanoid" id="Q9FKZ7"/>
<dbReference type="OMA" id="IGMAHEE"/>
<dbReference type="OrthoDB" id="642536at2759"/>
<dbReference type="PhylomeDB" id="Q9FKZ7"/>
<dbReference type="PRO" id="PR:Q9FKZ7"/>
<dbReference type="Proteomes" id="UP000006548">
    <property type="component" value="Chromosome 5"/>
</dbReference>
<dbReference type="ExpressionAtlas" id="Q9FKZ7">
    <property type="expression patterns" value="baseline and differential"/>
</dbReference>
<dbReference type="Gene3D" id="1.20.1280.50">
    <property type="match status" value="1"/>
</dbReference>
<dbReference type="InterPro" id="IPR036047">
    <property type="entry name" value="F-box-like_dom_sf"/>
</dbReference>
<dbReference type="InterPro" id="IPR050942">
    <property type="entry name" value="F-box_BR-signaling"/>
</dbReference>
<dbReference type="InterPro" id="IPR001810">
    <property type="entry name" value="F-box_dom"/>
</dbReference>
<dbReference type="InterPro" id="IPR005174">
    <property type="entry name" value="KIB1-4_b-propeller"/>
</dbReference>
<dbReference type="PANTHER" id="PTHR44259:SF25">
    <property type="entry name" value="F-BOX DOMAIN-CONTAINING PROTEIN"/>
    <property type="match status" value="1"/>
</dbReference>
<dbReference type="PANTHER" id="PTHR44259">
    <property type="entry name" value="OS07G0183000 PROTEIN-RELATED"/>
    <property type="match status" value="1"/>
</dbReference>
<dbReference type="Pfam" id="PF03478">
    <property type="entry name" value="Beta-prop_KIB1-4"/>
    <property type="match status" value="1"/>
</dbReference>
<dbReference type="Pfam" id="PF00646">
    <property type="entry name" value="F-box"/>
    <property type="match status" value="1"/>
</dbReference>
<dbReference type="SUPFAM" id="SSF81383">
    <property type="entry name" value="F-box domain"/>
    <property type="match status" value="1"/>
</dbReference>
<keyword id="KW-1185">Reference proteome</keyword>
<gene>
    <name type="ordered locus">At5g66830</name>
    <name type="ORF">MUD21.9</name>
</gene>
<proteinExistence type="predicted"/>
<reference key="1">
    <citation type="journal article" date="1998" name="DNA Res.">
        <title>Structural analysis of Arabidopsis thaliana chromosome 5. V. Sequence features of the regions of 1,381,565 bp covered by twenty one physically assigned P1 and TAC clones.</title>
        <authorList>
            <person name="Kaneko T."/>
            <person name="Kotani H."/>
            <person name="Nakamura Y."/>
            <person name="Sato S."/>
            <person name="Asamizu E."/>
            <person name="Miyajima N."/>
            <person name="Tabata S."/>
        </authorList>
    </citation>
    <scope>NUCLEOTIDE SEQUENCE [LARGE SCALE GENOMIC DNA]</scope>
    <source>
        <strain>cv. Columbia</strain>
    </source>
</reference>
<reference key="2">
    <citation type="journal article" date="2017" name="Plant J.">
        <title>Araport11: a complete reannotation of the Arabidopsis thaliana reference genome.</title>
        <authorList>
            <person name="Cheng C.Y."/>
            <person name="Krishnakumar V."/>
            <person name="Chan A.P."/>
            <person name="Thibaud-Nissen F."/>
            <person name="Schobel S."/>
            <person name="Town C.D."/>
        </authorList>
    </citation>
    <scope>GENOME REANNOTATION</scope>
    <source>
        <strain>cv. Columbia</strain>
    </source>
</reference>
<sequence>MASPLLPGPPDQRRNLDWCWSKLPSDLMQFVFDRLGFADFQRAKSVCSSWLSVSRNSQPNNQIPWMIRFPKDNNHCLLFNPEEEDKMYKTPNLGNDFAKSSCIASYGSWLLMQPESEYMEEDLDHQCNNLYILDLLTRERINLPILQPEFGLTCPILWTDEKSKDHLVIGMAHEELAISFKKGDSSWKQIPTLSGIEECFSMVFKDHKLYCLSNYKLKVFDFSGDIPVKVFKTSVSKLLNNPLCISMRMRLPGIPMKDQLNHFKDDMVVTLAGHVLIVKCHRPSLSKIWSFEIYKMEGNNNKWEKTVSLGDETILLDLGITVLAKDMQGIKANSIYFSNPTPYFKDQYDENEIFIFDLDSNTVEQPHRSVSSSFPRSRARWFLPCFKRESYFLQ</sequence>
<protein>
    <recommendedName>
        <fullName>Putative F-box protein At5g66830</fullName>
    </recommendedName>
</protein>